<name>ABCC5_DICDI</name>
<gene>
    <name type="primary">abcC5</name>
    <name type="ORF">DDB_G0286559</name>
</gene>
<comment type="subcellular location">
    <subcellularLocation>
        <location evidence="2">Membrane</location>
        <topology evidence="2">Multi-pass membrane protein</topology>
    </subcellularLocation>
</comment>
<comment type="similarity">
    <text evidence="4">Belongs to the ABC transporter superfamily. ABCC family. Conjugate transporter (TC 3.A.1.208) subfamily.</text>
</comment>
<reference key="1">
    <citation type="journal article" date="2005" name="Nature">
        <title>The genome of the social amoeba Dictyostelium discoideum.</title>
        <authorList>
            <person name="Eichinger L."/>
            <person name="Pachebat J.A."/>
            <person name="Gloeckner G."/>
            <person name="Rajandream M.A."/>
            <person name="Sucgang R."/>
            <person name="Berriman M."/>
            <person name="Song J."/>
            <person name="Olsen R."/>
            <person name="Szafranski K."/>
            <person name="Xu Q."/>
            <person name="Tunggal B."/>
            <person name="Kummerfeld S."/>
            <person name="Madera M."/>
            <person name="Konfortov B.A."/>
            <person name="Rivero F."/>
            <person name="Bankier A.T."/>
            <person name="Lehmann R."/>
            <person name="Hamlin N."/>
            <person name="Davies R."/>
            <person name="Gaudet P."/>
            <person name="Fey P."/>
            <person name="Pilcher K."/>
            <person name="Chen G."/>
            <person name="Saunders D."/>
            <person name="Sodergren E.J."/>
            <person name="Davis P."/>
            <person name="Kerhornou A."/>
            <person name="Nie X."/>
            <person name="Hall N."/>
            <person name="Anjard C."/>
            <person name="Hemphill L."/>
            <person name="Bason N."/>
            <person name="Farbrother P."/>
            <person name="Desany B."/>
            <person name="Just E."/>
            <person name="Morio T."/>
            <person name="Rost R."/>
            <person name="Churcher C.M."/>
            <person name="Cooper J."/>
            <person name="Haydock S."/>
            <person name="van Driessche N."/>
            <person name="Cronin A."/>
            <person name="Goodhead I."/>
            <person name="Muzny D.M."/>
            <person name="Mourier T."/>
            <person name="Pain A."/>
            <person name="Lu M."/>
            <person name="Harper D."/>
            <person name="Lindsay R."/>
            <person name="Hauser H."/>
            <person name="James K.D."/>
            <person name="Quiles M."/>
            <person name="Madan Babu M."/>
            <person name="Saito T."/>
            <person name="Buchrieser C."/>
            <person name="Wardroper A."/>
            <person name="Felder M."/>
            <person name="Thangavelu M."/>
            <person name="Johnson D."/>
            <person name="Knights A."/>
            <person name="Loulseged H."/>
            <person name="Mungall K.L."/>
            <person name="Oliver K."/>
            <person name="Price C."/>
            <person name="Quail M.A."/>
            <person name="Urushihara H."/>
            <person name="Hernandez J."/>
            <person name="Rabbinowitsch E."/>
            <person name="Steffen D."/>
            <person name="Sanders M."/>
            <person name="Ma J."/>
            <person name="Kohara Y."/>
            <person name="Sharp S."/>
            <person name="Simmonds M.N."/>
            <person name="Spiegler S."/>
            <person name="Tivey A."/>
            <person name="Sugano S."/>
            <person name="White B."/>
            <person name="Walker D."/>
            <person name="Woodward J.R."/>
            <person name="Winckler T."/>
            <person name="Tanaka Y."/>
            <person name="Shaulsky G."/>
            <person name="Schleicher M."/>
            <person name="Weinstock G.M."/>
            <person name="Rosenthal A."/>
            <person name="Cox E.C."/>
            <person name="Chisholm R.L."/>
            <person name="Gibbs R.A."/>
            <person name="Loomis W.F."/>
            <person name="Platzer M."/>
            <person name="Kay R.R."/>
            <person name="Williams J.G."/>
            <person name="Dear P.H."/>
            <person name="Noegel A.A."/>
            <person name="Barrell B.G."/>
            <person name="Kuspa A."/>
        </authorList>
    </citation>
    <scope>NUCLEOTIDE SEQUENCE [LARGE SCALE GENOMIC DNA]</scope>
    <source>
        <strain>AX4</strain>
    </source>
</reference>
<reference key="2">
    <citation type="journal article" date="2002" name="Eukaryot. Cell">
        <title>Evolutionary analyses of ABC transporters of Dictyostelium discoideum.</title>
        <authorList>
            <person name="Anjard C."/>
            <person name="Loomis W.F."/>
        </authorList>
    </citation>
    <scope>NUCLEOTIDE SEQUENCE [GENOMIC DNA] OF 613-1460</scope>
    <scope>NOMENCLATURE</scope>
    <source>
        <strain>AX4</strain>
    </source>
</reference>
<sequence>MKYNNLENDDSDIHNNNNNNESEGDSLIELEEINLEGNNNNDINNNNNINNNNDSLDYENNKGSKKKNNKKYVILNEEEDINDKKVENGENETSSFTYGHDNEFKDLPLPKKGFGGLKSLEENANFLSSMTYLWADKFVLYCFKNILQLDEIWELASYDKSSYLFDIMDKNWQNELKNSKKPNFMKAAFKSFGKHFALSWVHFGLNVISQFIGPIFLKKIVSFVIQYRENPGSVDPNLGYYYALILFVNSMLGSIFLYQSNMITSRTGNRLKSLIVLYVYKKSLKLTNSSRSKKSNGEIVNLMSNDAQRLLELFQMVNTLIFAVPMIIVSMILLYDCVGWPSFVALLVMGISLPYSLNRGSQLSIYRRKLVGFTDQRIKVVNEMFQAIKTIKLYAWEDYFSQKMMSKRGEEIKFLTQFVRFRYSLIVVVQSIPTIISIFMFTVYYLVNSKLPADKIFAAVAYLNIIRVPFTFLPYGYNIYIQFKVSIERVVNFLNMDEINQGDDKNNEINVNVCDQQKQQQTDIGIYMDNTTFSWAIKPQTNPPPPRTTPSNDKSSPSGNNSNNEKKEVQVSFSLKNTSCQVKEKGSLLMVIGPVGSGKSSFCQALLGEMELENNGSLRVVGSIAYVSQSAWIMNASLKDNILFGKEYNKERYEMVLNCCALLPDLALFPQGDLIEIGERGINLSGGQKQRVAIARAVYSDSDIYILDDILSAVDAHVGKHLFYNCIKGILKEKIVVLATNQLNYCPYSTQTLILKTGGEVEQYDTFENIISTINSAYGNSSLFSELLKQYAHMAGDSDKDSDEIVDDEMIKSKENNNDLYDGKLTTIEEREEGSVSFKHYMYYVTAGGGFLFLIALLGYCIDTSTSTFTNWWLSNWSSKHTSTGINNNNSSSSNSISSSSSYIIDSLSSLNINEDGDIENAGEFLGVFIAIGVLTVLLIIVRTIVFFEYSIRATTEIHKRLFWSILRAPMWFFDTVPLGRILNRFTRDTDIVDMLLTNSLNQFLNFSTNCIAILVIISIATPWLLLPMTPIIILFYFIQYFYRRTSIQIQRIESITRSPIFSHFAETLNGVITLRAFRKMGENVLKNQALLDDNNKCYLTLQAMNQWLGLRLSVLGNLITLLSCIFITVDRSSIAIASVGLSISYTLSLTTNLNKATQQLAELETKMNSIERISYYTENVPQEPDQIIESNRPPMGWPSLTNSNHTPPIIFENVVMSYRQGLPAVLKGISFEIKAGEKIGICGRTGSGKSSLLLALFRIVELSSGRIIIDGLDISKIGLKDLRSQLAIIPQEPVMFTGTLRSNLDSLSEHTDSELWDVLKEIQLYEHVKKVSVADEGLDLRVNDNWSQGQKQLIGLGRALLKKPKILVCDEATASVDSLSDELIQRIIREKFKDAIILTIAHRLNTIVESDRIMVLDSGSIVEFNKPSILAQNENSLFNWLIDETGTQNSQYLRSLIKH</sequence>
<accession>Q54LE6</accession>
<accession>Q8T6H4</accession>
<dbReference type="EMBL" id="AAFI02000089">
    <property type="protein sequence ID" value="EAL64035.1"/>
    <property type="molecule type" value="Genomic_DNA"/>
</dbReference>
<dbReference type="EMBL" id="AF474337">
    <property type="protein sequence ID" value="AAL85708.1"/>
    <property type="molecule type" value="Genomic_DNA"/>
</dbReference>
<dbReference type="RefSeq" id="XP_637615.1">
    <property type="nucleotide sequence ID" value="XM_632523.1"/>
</dbReference>
<dbReference type="SMR" id="Q54LE6"/>
<dbReference type="FunCoup" id="Q54LE6">
    <property type="interactions" value="53"/>
</dbReference>
<dbReference type="STRING" id="44689.Q54LE6"/>
<dbReference type="GlyGen" id="Q54LE6">
    <property type="glycosylation" value="1 site"/>
</dbReference>
<dbReference type="PaxDb" id="44689-DDB0220025"/>
<dbReference type="EnsemblProtists" id="EAL64035">
    <property type="protein sequence ID" value="EAL64035"/>
    <property type="gene ID" value="DDB_G0286559"/>
</dbReference>
<dbReference type="GeneID" id="8625755"/>
<dbReference type="KEGG" id="ddi:DDB_G0286559"/>
<dbReference type="dictyBase" id="DDB_G0286559">
    <property type="gene designation" value="abcC5"/>
</dbReference>
<dbReference type="VEuPathDB" id="AmoebaDB:DDB_G0286559"/>
<dbReference type="eggNOG" id="KOG0054">
    <property type="taxonomic scope" value="Eukaryota"/>
</dbReference>
<dbReference type="HOGENOM" id="CLU_000604_27_6_1"/>
<dbReference type="InParanoid" id="Q54LE6"/>
<dbReference type="OMA" id="ACAQWFH"/>
<dbReference type="PhylomeDB" id="Q54LE6"/>
<dbReference type="Reactome" id="R-DDI-159418">
    <property type="pathway name" value="Recycling of bile acids and salts"/>
</dbReference>
<dbReference type="Reactome" id="R-DDI-189483">
    <property type="pathway name" value="Heme degradation"/>
</dbReference>
<dbReference type="Reactome" id="R-DDI-382556">
    <property type="pathway name" value="ABC-family proteins mediated transport"/>
</dbReference>
<dbReference type="Reactome" id="R-DDI-9749641">
    <property type="pathway name" value="Aspirin ADME"/>
</dbReference>
<dbReference type="Reactome" id="R-DDI-9753281">
    <property type="pathway name" value="Paracetamol ADME"/>
</dbReference>
<dbReference type="Reactome" id="R-DDI-9754706">
    <property type="pathway name" value="Atorvastatin ADME"/>
</dbReference>
<dbReference type="PRO" id="PR:Q54LE6"/>
<dbReference type="Proteomes" id="UP000002195">
    <property type="component" value="Chromosome 4"/>
</dbReference>
<dbReference type="GO" id="GO:0016020">
    <property type="term" value="C:membrane"/>
    <property type="evidence" value="ECO:0000318"/>
    <property type="project" value="GO_Central"/>
</dbReference>
<dbReference type="GO" id="GO:0140359">
    <property type="term" value="F:ABC-type transporter activity"/>
    <property type="evidence" value="ECO:0007669"/>
    <property type="project" value="InterPro"/>
</dbReference>
<dbReference type="GO" id="GO:0005524">
    <property type="term" value="F:ATP binding"/>
    <property type="evidence" value="ECO:0007669"/>
    <property type="project" value="UniProtKB-KW"/>
</dbReference>
<dbReference type="GO" id="GO:0016887">
    <property type="term" value="F:ATP hydrolysis activity"/>
    <property type="evidence" value="ECO:0007669"/>
    <property type="project" value="InterPro"/>
</dbReference>
<dbReference type="GO" id="GO:0042626">
    <property type="term" value="F:ATPase-coupled transmembrane transporter activity"/>
    <property type="evidence" value="ECO:0000318"/>
    <property type="project" value="GO_Central"/>
</dbReference>
<dbReference type="GO" id="GO:0030587">
    <property type="term" value="P:sorocarp development"/>
    <property type="evidence" value="ECO:0007669"/>
    <property type="project" value="UniProtKB-ARBA"/>
</dbReference>
<dbReference type="GO" id="GO:0055085">
    <property type="term" value="P:transmembrane transport"/>
    <property type="evidence" value="ECO:0000318"/>
    <property type="project" value="GO_Central"/>
</dbReference>
<dbReference type="CDD" id="cd18579">
    <property type="entry name" value="ABC_6TM_ABCC_D1"/>
    <property type="match status" value="1"/>
</dbReference>
<dbReference type="CDD" id="cd18603">
    <property type="entry name" value="ABC_6TM_MRP1_2_3_6_D2_like"/>
    <property type="match status" value="1"/>
</dbReference>
<dbReference type="CDD" id="cd03250">
    <property type="entry name" value="ABCC_MRP_domain1"/>
    <property type="match status" value="1"/>
</dbReference>
<dbReference type="CDD" id="cd03244">
    <property type="entry name" value="ABCC_MRP_domain2"/>
    <property type="match status" value="1"/>
</dbReference>
<dbReference type="FunFam" id="1.20.1560.10:FF:000024">
    <property type="entry name" value="ABC transporter C family member 2"/>
    <property type="match status" value="1"/>
</dbReference>
<dbReference type="FunFam" id="1.20.1560.10:FF:000010">
    <property type="entry name" value="Multidrug resistance-associated ABC transporter"/>
    <property type="match status" value="1"/>
</dbReference>
<dbReference type="FunFam" id="3.40.50.300:FF:000997">
    <property type="entry name" value="Multidrug resistance-associated protein 1"/>
    <property type="match status" value="1"/>
</dbReference>
<dbReference type="FunFam" id="3.40.50.300:FF:000163">
    <property type="entry name" value="Multidrug resistance-associated protein member 4"/>
    <property type="match status" value="1"/>
</dbReference>
<dbReference type="Gene3D" id="1.20.1560.10">
    <property type="entry name" value="ABC transporter type 1, transmembrane domain"/>
    <property type="match status" value="2"/>
</dbReference>
<dbReference type="Gene3D" id="3.40.50.300">
    <property type="entry name" value="P-loop containing nucleotide triphosphate hydrolases"/>
    <property type="match status" value="2"/>
</dbReference>
<dbReference type="InterPro" id="IPR003593">
    <property type="entry name" value="AAA+_ATPase"/>
</dbReference>
<dbReference type="InterPro" id="IPR011527">
    <property type="entry name" value="ABC1_TM_dom"/>
</dbReference>
<dbReference type="InterPro" id="IPR036640">
    <property type="entry name" value="ABC1_TM_sf"/>
</dbReference>
<dbReference type="InterPro" id="IPR003439">
    <property type="entry name" value="ABC_transporter-like_ATP-bd"/>
</dbReference>
<dbReference type="InterPro" id="IPR017871">
    <property type="entry name" value="ABC_transporter-like_CS"/>
</dbReference>
<dbReference type="InterPro" id="IPR050173">
    <property type="entry name" value="ABC_transporter_C-like"/>
</dbReference>
<dbReference type="InterPro" id="IPR044746">
    <property type="entry name" value="ABCC_6TM_D1"/>
</dbReference>
<dbReference type="InterPro" id="IPR027417">
    <property type="entry name" value="P-loop_NTPase"/>
</dbReference>
<dbReference type="PANTHER" id="PTHR24223">
    <property type="entry name" value="ATP-BINDING CASSETTE SUB-FAMILY C"/>
    <property type="match status" value="1"/>
</dbReference>
<dbReference type="PANTHER" id="PTHR24223:SF456">
    <property type="entry name" value="MULTIDRUG RESISTANCE-ASSOCIATED PROTEIN LETHAL(2)03659"/>
    <property type="match status" value="1"/>
</dbReference>
<dbReference type="Pfam" id="PF00664">
    <property type="entry name" value="ABC_membrane"/>
    <property type="match status" value="2"/>
</dbReference>
<dbReference type="Pfam" id="PF00005">
    <property type="entry name" value="ABC_tran"/>
    <property type="match status" value="2"/>
</dbReference>
<dbReference type="SMART" id="SM00382">
    <property type="entry name" value="AAA"/>
    <property type="match status" value="2"/>
</dbReference>
<dbReference type="SUPFAM" id="SSF90123">
    <property type="entry name" value="ABC transporter transmembrane region"/>
    <property type="match status" value="2"/>
</dbReference>
<dbReference type="SUPFAM" id="SSF52540">
    <property type="entry name" value="P-loop containing nucleoside triphosphate hydrolases"/>
    <property type="match status" value="2"/>
</dbReference>
<dbReference type="PROSITE" id="PS50929">
    <property type="entry name" value="ABC_TM1F"/>
    <property type="match status" value="2"/>
</dbReference>
<dbReference type="PROSITE" id="PS00211">
    <property type="entry name" value="ABC_TRANSPORTER_1"/>
    <property type="match status" value="1"/>
</dbReference>
<dbReference type="PROSITE" id="PS50893">
    <property type="entry name" value="ABC_TRANSPORTER_2"/>
    <property type="match status" value="2"/>
</dbReference>
<organism>
    <name type="scientific">Dictyostelium discoideum</name>
    <name type="common">Social amoeba</name>
    <dbReference type="NCBI Taxonomy" id="44689"/>
    <lineage>
        <taxon>Eukaryota</taxon>
        <taxon>Amoebozoa</taxon>
        <taxon>Evosea</taxon>
        <taxon>Eumycetozoa</taxon>
        <taxon>Dictyostelia</taxon>
        <taxon>Dictyosteliales</taxon>
        <taxon>Dictyosteliaceae</taxon>
        <taxon>Dictyostelium</taxon>
    </lineage>
</organism>
<feature type="chain" id="PRO_0000363850" description="ABC transporter C family member 5">
    <location>
        <begin position="1"/>
        <end position="1460"/>
    </location>
</feature>
<feature type="transmembrane region" description="Helical" evidence="2">
    <location>
        <begin position="196"/>
        <end position="216"/>
    </location>
</feature>
<feature type="transmembrane region" description="Helical" evidence="2">
    <location>
        <begin position="238"/>
        <end position="258"/>
    </location>
</feature>
<feature type="transmembrane region" description="Helical" evidence="2">
    <location>
        <begin position="320"/>
        <end position="340"/>
    </location>
</feature>
<feature type="transmembrane region" description="Helical" evidence="2">
    <location>
        <begin position="425"/>
        <end position="445"/>
    </location>
</feature>
<feature type="transmembrane region" description="Helical" evidence="2">
    <location>
        <begin position="456"/>
        <end position="476"/>
    </location>
</feature>
<feature type="transmembrane region" description="Helical" evidence="2">
    <location>
        <begin position="842"/>
        <end position="862"/>
    </location>
</feature>
<feature type="transmembrane region" description="Helical" evidence="2">
    <location>
        <begin position="922"/>
        <end position="942"/>
    </location>
</feature>
<feature type="transmembrane region" description="Helical" evidence="2">
    <location>
        <begin position="1014"/>
        <end position="1034"/>
    </location>
</feature>
<feature type="transmembrane region" description="Helical" evidence="2">
    <location>
        <begin position="1108"/>
        <end position="1128"/>
    </location>
</feature>
<feature type="domain" description="ABC transmembrane type-1 1" evidence="2">
    <location>
        <begin position="196"/>
        <end position="482"/>
    </location>
</feature>
<feature type="domain" description="ABC transporter 1" evidence="1">
    <location>
        <begin position="560"/>
        <end position="783"/>
    </location>
</feature>
<feature type="domain" description="ABC transmembrane type-1 2" evidence="2">
    <location>
        <begin position="853"/>
        <end position="1166"/>
    </location>
</feature>
<feature type="domain" description="ABC transporter 2" evidence="1">
    <location>
        <begin position="1210"/>
        <end position="1444"/>
    </location>
</feature>
<feature type="region of interest" description="Disordered" evidence="3">
    <location>
        <begin position="1"/>
        <end position="23"/>
    </location>
</feature>
<feature type="region of interest" description="Disordered" evidence="3">
    <location>
        <begin position="37"/>
        <end position="68"/>
    </location>
</feature>
<feature type="region of interest" description="Disordered" evidence="3">
    <location>
        <begin position="537"/>
        <end position="567"/>
    </location>
</feature>
<feature type="compositionally biased region" description="Low complexity" evidence="3">
    <location>
        <begin position="37"/>
        <end position="55"/>
    </location>
</feature>
<feature type="compositionally biased region" description="Polar residues" evidence="3">
    <location>
        <begin position="551"/>
        <end position="563"/>
    </location>
</feature>
<feature type="binding site" evidence="1">
    <location>
        <begin position="593"/>
        <end position="600"/>
    </location>
    <ligand>
        <name>ATP</name>
        <dbReference type="ChEBI" id="CHEBI:30616"/>
    </ligand>
</feature>
<feature type="binding site" evidence="1">
    <location>
        <begin position="1244"/>
        <end position="1251"/>
    </location>
    <ligand>
        <name>ATP</name>
        <dbReference type="ChEBI" id="CHEBI:30616"/>
    </ligand>
</feature>
<feature type="sequence conflict" description="In Ref. 2; AAL85708." evidence="4" ref="2">
    <original>ENN</original>
    <variation>REY</variation>
    <location>
        <begin position="613"/>
        <end position="615"/>
    </location>
</feature>
<feature type="sequence conflict" description="In Ref. 2; AAL85708." evidence="4" ref="2">
    <original>K</original>
    <variation>N</variation>
    <location>
        <position position="839"/>
    </location>
</feature>
<keyword id="KW-0067">ATP-binding</keyword>
<keyword id="KW-0472">Membrane</keyword>
<keyword id="KW-0547">Nucleotide-binding</keyword>
<keyword id="KW-1185">Reference proteome</keyword>
<keyword id="KW-0677">Repeat</keyword>
<keyword id="KW-0812">Transmembrane</keyword>
<keyword id="KW-1133">Transmembrane helix</keyword>
<keyword id="KW-0813">Transport</keyword>
<proteinExistence type="inferred from homology"/>
<evidence type="ECO:0000255" key="1">
    <source>
        <dbReference type="PROSITE-ProRule" id="PRU00434"/>
    </source>
</evidence>
<evidence type="ECO:0000255" key="2">
    <source>
        <dbReference type="PROSITE-ProRule" id="PRU00441"/>
    </source>
</evidence>
<evidence type="ECO:0000256" key="3">
    <source>
        <dbReference type="SAM" id="MobiDB-lite"/>
    </source>
</evidence>
<evidence type="ECO:0000305" key="4"/>
<protein>
    <recommendedName>
        <fullName>ABC transporter C family member 5</fullName>
    </recommendedName>
    <alternativeName>
        <fullName>ABC transporter ABCC.5</fullName>
    </alternativeName>
</protein>